<protein>
    <recommendedName>
        <fullName evidence="1">Small ribosomal subunit protein uS11</fullName>
    </recommendedName>
    <alternativeName>
        <fullName evidence="2">30S ribosomal protein S11</fullName>
    </alternativeName>
</protein>
<dbReference type="EMBL" id="CR378663">
    <property type="protein sequence ID" value="CAG18782.1"/>
    <property type="molecule type" value="Genomic_DNA"/>
</dbReference>
<dbReference type="RefSeq" id="WP_005370963.1">
    <property type="nucleotide sequence ID" value="NC_006370.1"/>
</dbReference>
<dbReference type="SMR" id="Q6LV93"/>
<dbReference type="STRING" id="298386.PBPRA0343"/>
<dbReference type="GeneID" id="93550472"/>
<dbReference type="KEGG" id="ppr:PBPRA0343"/>
<dbReference type="eggNOG" id="COG0100">
    <property type="taxonomic scope" value="Bacteria"/>
</dbReference>
<dbReference type="HOGENOM" id="CLU_072439_5_0_6"/>
<dbReference type="Proteomes" id="UP000000593">
    <property type="component" value="Chromosome 1"/>
</dbReference>
<dbReference type="GO" id="GO:1990904">
    <property type="term" value="C:ribonucleoprotein complex"/>
    <property type="evidence" value="ECO:0007669"/>
    <property type="project" value="UniProtKB-KW"/>
</dbReference>
<dbReference type="GO" id="GO:0005840">
    <property type="term" value="C:ribosome"/>
    <property type="evidence" value="ECO:0007669"/>
    <property type="project" value="UniProtKB-KW"/>
</dbReference>
<dbReference type="GO" id="GO:0019843">
    <property type="term" value="F:rRNA binding"/>
    <property type="evidence" value="ECO:0007669"/>
    <property type="project" value="UniProtKB-UniRule"/>
</dbReference>
<dbReference type="GO" id="GO:0003735">
    <property type="term" value="F:structural constituent of ribosome"/>
    <property type="evidence" value="ECO:0007669"/>
    <property type="project" value="InterPro"/>
</dbReference>
<dbReference type="GO" id="GO:0006412">
    <property type="term" value="P:translation"/>
    <property type="evidence" value="ECO:0007669"/>
    <property type="project" value="UniProtKB-UniRule"/>
</dbReference>
<dbReference type="FunFam" id="3.30.420.80:FF:000001">
    <property type="entry name" value="30S ribosomal protein S11"/>
    <property type="match status" value="1"/>
</dbReference>
<dbReference type="Gene3D" id="3.30.420.80">
    <property type="entry name" value="Ribosomal protein S11"/>
    <property type="match status" value="1"/>
</dbReference>
<dbReference type="HAMAP" id="MF_01310">
    <property type="entry name" value="Ribosomal_uS11"/>
    <property type="match status" value="1"/>
</dbReference>
<dbReference type="InterPro" id="IPR001971">
    <property type="entry name" value="Ribosomal_uS11"/>
</dbReference>
<dbReference type="InterPro" id="IPR019981">
    <property type="entry name" value="Ribosomal_uS11_bac-type"/>
</dbReference>
<dbReference type="InterPro" id="IPR018102">
    <property type="entry name" value="Ribosomal_uS11_CS"/>
</dbReference>
<dbReference type="InterPro" id="IPR036967">
    <property type="entry name" value="Ribosomal_uS11_sf"/>
</dbReference>
<dbReference type="NCBIfam" id="NF003698">
    <property type="entry name" value="PRK05309.1"/>
    <property type="match status" value="1"/>
</dbReference>
<dbReference type="NCBIfam" id="TIGR03632">
    <property type="entry name" value="uS11_bact"/>
    <property type="match status" value="1"/>
</dbReference>
<dbReference type="PANTHER" id="PTHR11759">
    <property type="entry name" value="40S RIBOSOMAL PROTEIN S14/30S RIBOSOMAL PROTEIN S11"/>
    <property type="match status" value="1"/>
</dbReference>
<dbReference type="Pfam" id="PF00411">
    <property type="entry name" value="Ribosomal_S11"/>
    <property type="match status" value="1"/>
</dbReference>
<dbReference type="PIRSF" id="PIRSF002131">
    <property type="entry name" value="Ribosomal_S11"/>
    <property type="match status" value="1"/>
</dbReference>
<dbReference type="SUPFAM" id="SSF53137">
    <property type="entry name" value="Translational machinery components"/>
    <property type="match status" value="1"/>
</dbReference>
<dbReference type="PROSITE" id="PS00054">
    <property type="entry name" value="RIBOSOMAL_S11"/>
    <property type="match status" value="1"/>
</dbReference>
<sequence>MAKQPTRARKRVRKQVADGVAHIHASFNNTIVTITDRQGNALSWATAGGSGFRGSRKSTPFAAQVAAERCGEMAKEYGVKNLEVMVKGPGPGRESTIRALNAAGFRITNIVDATPIPHNGCRPPKKRRV</sequence>
<keyword id="KW-1185">Reference proteome</keyword>
<keyword id="KW-0687">Ribonucleoprotein</keyword>
<keyword id="KW-0689">Ribosomal protein</keyword>
<keyword id="KW-0694">RNA-binding</keyword>
<keyword id="KW-0699">rRNA-binding</keyword>
<comment type="function">
    <text evidence="1">Located on the platform of the 30S subunit, it bridges several disparate RNA helices of the 16S rRNA. Forms part of the Shine-Dalgarno cleft in the 70S ribosome.</text>
</comment>
<comment type="subunit">
    <text evidence="1">Part of the 30S ribosomal subunit. Interacts with proteins S7 and S18. Binds to IF-3.</text>
</comment>
<comment type="similarity">
    <text evidence="1">Belongs to the universal ribosomal protein uS11 family.</text>
</comment>
<organism>
    <name type="scientific">Photobacterium profundum (strain SS9)</name>
    <dbReference type="NCBI Taxonomy" id="298386"/>
    <lineage>
        <taxon>Bacteria</taxon>
        <taxon>Pseudomonadati</taxon>
        <taxon>Pseudomonadota</taxon>
        <taxon>Gammaproteobacteria</taxon>
        <taxon>Vibrionales</taxon>
        <taxon>Vibrionaceae</taxon>
        <taxon>Photobacterium</taxon>
    </lineage>
</organism>
<reference key="1">
    <citation type="journal article" date="2005" name="Science">
        <title>Life at depth: Photobacterium profundum genome sequence and expression analysis.</title>
        <authorList>
            <person name="Vezzi A."/>
            <person name="Campanaro S."/>
            <person name="D'Angelo M."/>
            <person name="Simonato F."/>
            <person name="Vitulo N."/>
            <person name="Lauro F.M."/>
            <person name="Cestaro A."/>
            <person name="Malacrida G."/>
            <person name="Simionati B."/>
            <person name="Cannata N."/>
            <person name="Romualdi C."/>
            <person name="Bartlett D.H."/>
            <person name="Valle G."/>
        </authorList>
    </citation>
    <scope>NUCLEOTIDE SEQUENCE [LARGE SCALE GENOMIC DNA]</scope>
    <source>
        <strain>ATCC BAA-1253 / SS9</strain>
    </source>
</reference>
<evidence type="ECO:0000255" key="1">
    <source>
        <dbReference type="HAMAP-Rule" id="MF_01310"/>
    </source>
</evidence>
<evidence type="ECO:0000305" key="2"/>
<feature type="chain" id="PRO_0000123195" description="Small ribosomal subunit protein uS11">
    <location>
        <begin position="1"/>
        <end position="129"/>
    </location>
</feature>
<gene>
    <name evidence="1" type="primary">rpsK</name>
    <name type="ordered locus">PBPRA0343</name>
</gene>
<name>RS11_PHOPR</name>
<proteinExistence type="inferred from homology"/>
<accession>Q6LV93</accession>